<proteinExistence type="inferred from homology"/>
<organism>
    <name type="scientific">Syntrophobacter fumaroxidans (strain DSM 10017 / MPOB)</name>
    <dbReference type="NCBI Taxonomy" id="335543"/>
    <lineage>
        <taxon>Bacteria</taxon>
        <taxon>Pseudomonadati</taxon>
        <taxon>Thermodesulfobacteriota</taxon>
        <taxon>Syntrophobacteria</taxon>
        <taxon>Syntrophobacterales</taxon>
        <taxon>Syntrophobacteraceae</taxon>
        <taxon>Syntrophobacter</taxon>
    </lineage>
</organism>
<protein>
    <recommendedName>
        <fullName evidence="1">UPF0251 protein Sfum_2819</fullName>
    </recommendedName>
</protein>
<evidence type="ECO:0000255" key="1">
    <source>
        <dbReference type="HAMAP-Rule" id="MF_00674"/>
    </source>
</evidence>
<gene>
    <name type="ordered locus">Sfum_2819</name>
</gene>
<reference key="1">
    <citation type="submission" date="2006-10" db="EMBL/GenBank/DDBJ databases">
        <title>Complete sequence of Syntrophobacter fumaroxidans MPOB.</title>
        <authorList>
            <consortium name="US DOE Joint Genome Institute"/>
            <person name="Copeland A."/>
            <person name="Lucas S."/>
            <person name="Lapidus A."/>
            <person name="Barry K."/>
            <person name="Detter J.C."/>
            <person name="Glavina del Rio T."/>
            <person name="Hammon N."/>
            <person name="Israni S."/>
            <person name="Pitluck S."/>
            <person name="Goltsman E.G."/>
            <person name="Martinez M."/>
            <person name="Schmutz J."/>
            <person name="Larimer F."/>
            <person name="Land M."/>
            <person name="Hauser L."/>
            <person name="Kyrpides N."/>
            <person name="Kim E."/>
            <person name="Boone D.R."/>
            <person name="Brockman F."/>
            <person name="Culley D."/>
            <person name="Ferry J."/>
            <person name="Gunsalus R."/>
            <person name="McInerney M.J."/>
            <person name="Morrison M."/>
            <person name="Plugge C."/>
            <person name="Rohlin L."/>
            <person name="Scholten J."/>
            <person name="Sieber J."/>
            <person name="Stams A.J.M."/>
            <person name="Worm P."/>
            <person name="Henstra A.M."/>
            <person name="Richardson P."/>
        </authorList>
    </citation>
    <scope>NUCLEOTIDE SEQUENCE [LARGE SCALE GENOMIC DNA]</scope>
    <source>
        <strain>DSM 10017 / MPOB</strain>
    </source>
</reference>
<accession>A0LM45</accession>
<name>Y2819_SYNFM</name>
<sequence length="156" mass="16697">MPRPKCCRTITGEPPCRAFTPAGTTGPAPSRVVLSEDEFEAVRLADFEGLYQEEAAERMGVSRQTFGRIVGAARAKIARVLVEGLALSIGGGGGTGIAPSRSYMCRLCRHTWDMPSETDSPAECPACRGRNLFRCGASLETAASGRECCPRERKAT</sequence>
<keyword id="KW-1185">Reference proteome</keyword>
<dbReference type="EMBL" id="CP000478">
    <property type="protein sequence ID" value="ABK18497.1"/>
    <property type="molecule type" value="Genomic_DNA"/>
</dbReference>
<dbReference type="RefSeq" id="WP_011699664.1">
    <property type="nucleotide sequence ID" value="NC_008554.1"/>
</dbReference>
<dbReference type="STRING" id="335543.Sfum_2819"/>
<dbReference type="KEGG" id="sfu:Sfum_2819"/>
<dbReference type="eggNOG" id="COG1342">
    <property type="taxonomic scope" value="Bacteria"/>
</dbReference>
<dbReference type="HOGENOM" id="CLU_094511_0_1_7"/>
<dbReference type="InParanoid" id="A0LM45"/>
<dbReference type="OrthoDB" id="280278at2"/>
<dbReference type="Proteomes" id="UP000001784">
    <property type="component" value="Chromosome"/>
</dbReference>
<dbReference type="CDD" id="cd06171">
    <property type="entry name" value="Sigma70_r4"/>
    <property type="match status" value="1"/>
</dbReference>
<dbReference type="Gene3D" id="1.10.10.10">
    <property type="entry name" value="Winged helix-like DNA-binding domain superfamily/Winged helix DNA-binding domain"/>
    <property type="match status" value="1"/>
</dbReference>
<dbReference type="HAMAP" id="MF_00674">
    <property type="entry name" value="UPF0251"/>
    <property type="match status" value="1"/>
</dbReference>
<dbReference type="InterPro" id="IPR013324">
    <property type="entry name" value="RNA_pol_sigma_r3/r4-like"/>
</dbReference>
<dbReference type="InterPro" id="IPR002852">
    <property type="entry name" value="UPF0251"/>
</dbReference>
<dbReference type="InterPro" id="IPR036388">
    <property type="entry name" value="WH-like_DNA-bd_sf"/>
</dbReference>
<dbReference type="PANTHER" id="PTHR37478">
    <property type="match status" value="1"/>
</dbReference>
<dbReference type="PANTHER" id="PTHR37478:SF2">
    <property type="entry name" value="UPF0251 PROTEIN TK0562"/>
    <property type="match status" value="1"/>
</dbReference>
<dbReference type="Pfam" id="PF02001">
    <property type="entry name" value="DUF134"/>
    <property type="match status" value="1"/>
</dbReference>
<dbReference type="SUPFAM" id="SSF88659">
    <property type="entry name" value="Sigma3 and sigma4 domains of RNA polymerase sigma factors"/>
    <property type="match status" value="1"/>
</dbReference>
<comment type="similarity">
    <text evidence="1">Belongs to the UPF0251 family.</text>
</comment>
<feature type="chain" id="PRO_1000044757" description="UPF0251 protein Sfum_2819">
    <location>
        <begin position="1"/>
        <end position="156"/>
    </location>
</feature>